<name>GLPG_SALPA</name>
<reference key="1">
    <citation type="journal article" date="2004" name="Nat. Genet.">
        <title>Comparison of genome degradation in Paratyphi A and Typhi, human-restricted serovars of Salmonella enterica that cause typhoid.</title>
        <authorList>
            <person name="McClelland M."/>
            <person name="Sanderson K.E."/>
            <person name="Clifton S.W."/>
            <person name="Latreille P."/>
            <person name="Porwollik S."/>
            <person name="Sabo A."/>
            <person name="Meyer R."/>
            <person name="Bieri T."/>
            <person name="Ozersky P."/>
            <person name="McLellan M."/>
            <person name="Harkins C.R."/>
            <person name="Wang C."/>
            <person name="Nguyen C."/>
            <person name="Berghoff A."/>
            <person name="Elliott G."/>
            <person name="Kohlberg S."/>
            <person name="Strong C."/>
            <person name="Du F."/>
            <person name="Carter J."/>
            <person name="Kremizki C."/>
            <person name="Layman D."/>
            <person name="Leonard S."/>
            <person name="Sun H."/>
            <person name="Fulton L."/>
            <person name="Nash W."/>
            <person name="Miner T."/>
            <person name="Minx P."/>
            <person name="Delehaunty K."/>
            <person name="Fronick C."/>
            <person name="Magrini V."/>
            <person name="Nhan M."/>
            <person name="Warren W."/>
            <person name="Florea L."/>
            <person name="Spieth J."/>
            <person name="Wilson R.K."/>
        </authorList>
    </citation>
    <scope>NUCLEOTIDE SEQUENCE [LARGE SCALE GENOMIC DNA]</scope>
    <source>
        <strain>ATCC 9150 / SARB42</strain>
    </source>
</reference>
<comment type="function">
    <text evidence="1">Rhomboid-type serine protease that catalyzes intramembrane proteolysis.</text>
</comment>
<comment type="catalytic activity">
    <reaction evidence="1">
        <text>Cleaves type-1 transmembrane domains using a catalytic dyad composed of serine and histidine that are contributed by different transmembrane domains.</text>
        <dbReference type="EC" id="3.4.21.105"/>
    </reaction>
</comment>
<comment type="subcellular location">
    <subcellularLocation>
        <location evidence="1">Cell inner membrane</location>
        <topology evidence="1">Multi-pass membrane protein</topology>
    </subcellularLocation>
</comment>
<comment type="similarity">
    <text evidence="1">Belongs to the peptidase S54 family.</text>
</comment>
<dbReference type="EC" id="3.4.21.105" evidence="1"/>
<dbReference type="EMBL" id="CP000026">
    <property type="protein sequence ID" value="AAV79195.1"/>
    <property type="molecule type" value="Genomic_DNA"/>
</dbReference>
<dbReference type="RefSeq" id="WP_000928706.1">
    <property type="nucleotide sequence ID" value="NC_006511.1"/>
</dbReference>
<dbReference type="SMR" id="Q5PLZ8"/>
<dbReference type="KEGG" id="spt:SPA3382"/>
<dbReference type="HOGENOM" id="CLU_058989_0_0_6"/>
<dbReference type="Proteomes" id="UP000008185">
    <property type="component" value="Chromosome"/>
</dbReference>
<dbReference type="GO" id="GO:0005886">
    <property type="term" value="C:plasma membrane"/>
    <property type="evidence" value="ECO:0007669"/>
    <property type="project" value="UniProtKB-SubCell"/>
</dbReference>
<dbReference type="GO" id="GO:0004252">
    <property type="term" value="F:serine-type endopeptidase activity"/>
    <property type="evidence" value="ECO:0007669"/>
    <property type="project" value="UniProtKB-UniRule"/>
</dbReference>
<dbReference type="GO" id="GO:0006508">
    <property type="term" value="P:proteolysis"/>
    <property type="evidence" value="ECO:0007669"/>
    <property type="project" value="UniProtKB-UniRule"/>
</dbReference>
<dbReference type="FunFam" id="1.20.1540.10:FF:000003">
    <property type="entry name" value="Rhomboid protease GlpG"/>
    <property type="match status" value="1"/>
</dbReference>
<dbReference type="FunFam" id="3.30.70.2350:FF:000001">
    <property type="entry name" value="Rhomboid protease GlpG"/>
    <property type="match status" value="1"/>
</dbReference>
<dbReference type="Gene3D" id="3.30.70.2350">
    <property type="match status" value="1"/>
</dbReference>
<dbReference type="Gene3D" id="1.20.1540.10">
    <property type="entry name" value="Rhomboid-like"/>
    <property type="match status" value="1"/>
</dbReference>
<dbReference type="HAMAP" id="MF_01594">
    <property type="entry name" value="Rhomboid_GlpG"/>
    <property type="match status" value="1"/>
</dbReference>
<dbReference type="InterPro" id="IPR038236">
    <property type="entry name" value="GlpG_N_sf"/>
</dbReference>
<dbReference type="InterPro" id="IPR022732">
    <property type="entry name" value="Peptidase_S54_GlpG_N"/>
</dbReference>
<dbReference type="InterPro" id="IPR022764">
    <property type="entry name" value="Peptidase_S54_rhomboid_dom"/>
</dbReference>
<dbReference type="InterPro" id="IPR035952">
    <property type="entry name" value="Rhomboid-like_sf"/>
</dbReference>
<dbReference type="InterPro" id="IPR023662">
    <property type="entry name" value="Rhomboid_protease_GlpG"/>
</dbReference>
<dbReference type="NCBIfam" id="NF008155">
    <property type="entry name" value="PRK10907.1"/>
    <property type="match status" value="1"/>
</dbReference>
<dbReference type="NCBIfam" id="TIGR04239">
    <property type="entry name" value="rhombo_GlpG"/>
    <property type="match status" value="1"/>
</dbReference>
<dbReference type="PANTHER" id="PTHR43066:SF26">
    <property type="entry name" value="RHOMBOID PROTEASE GLPG"/>
    <property type="match status" value="1"/>
</dbReference>
<dbReference type="PANTHER" id="PTHR43066">
    <property type="entry name" value="RHOMBOID-RELATED PROTEIN"/>
    <property type="match status" value="1"/>
</dbReference>
<dbReference type="Pfam" id="PF01694">
    <property type="entry name" value="Rhomboid"/>
    <property type="match status" value="1"/>
</dbReference>
<dbReference type="Pfam" id="PF12122">
    <property type="entry name" value="Rhomboid_N"/>
    <property type="match status" value="1"/>
</dbReference>
<dbReference type="SUPFAM" id="SSF144091">
    <property type="entry name" value="Rhomboid-like"/>
    <property type="match status" value="1"/>
</dbReference>
<feature type="chain" id="PRO_0000321689" description="Rhomboid protease GlpG">
    <location>
        <begin position="1"/>
        <end position="276"/>
    </location>
</feature>
<feature type="transmembrane region" description="Helical" evidence="1">
    <location>
        <begin position="94"/>
        <end position="114"/>
    </location>
</feature>
<feature type="transmembrane region" description="Helical" evidence="1">
    <location>
        <begin position="142"/>
        <end position="162"/>
    </location>
</feature>
<feature type="transmembrane region" description="Helical" evidence="1">
    <location>
        <begin position="169"/>
        <end position="189"/>
    </location>
</feature>
<feature type="transmembrane region" description="Helical" evidence="1">
    <location>
        <begin position="192"/>
        <end position="212"/>
    </location>
</feature>
<feature type="transmembrane region" description="Helical" evidence="1">
    <location>
        <begin position="229"/>
        <end position="249"/>
    </location>
</feature>
<feature type="transmembrane region" description="Helical" evidence="1">
    <location>
        <begin position="250"/>
        <end position="270"/>
    </location>
</feature>
<feature type="active site" description="Nucleophile" evidence="1">
    <location>
        <position position="201"/>
    </location>
</feature>
<feature type="active site" evidence="1">
    <location>
        <position position="254"/>
    </location>
</feature>
<proteinExistence type="inferred from homology"/>
<keyword id="KW-0997">Cell inner membrane</keyword>
<keyword id="KW-1003">Cell membrane</keyword>
<keyword id="KW-0378">Hydrolase</keyword>
<keyword id="KW-0472">Membrane</keyword>
<keyword id="KW-0645">Protease</keyword>
<keyword id="KW-0720">Serine protease</keyword>
<keyword id="KW-0812">Transmembrane</keyword>
<keyword id="KW-1133">Transmembrane helix</keyword>
<organism>
    <name type="scientific">Salmonella paratyphi A (strain ATCC 9150 / SARB42)</name>
    <dbReference type="NCBI Taxonomy" id="295319"/>
    <lineage>
        <taxon>Bacteria</taxon>
        <taxon>Pseudomonadati</taxon>
        <taxon>Pseudomonadota</taxon>
        <taxon>Gammaproteobacteria</taxon>
        <taxon>Enterobacterales</taxon>
        <taxon>Enterobacteriaceae</taxon>
        <taxon>Salmonella</taxon>
    </lineage>
</organism>
<sequence length="276" mass="31457">MLMITSFANPRVAQAFVDYMATQGVILTIQQHNQSDIWLADESQAERVRVELARFIENPGDPRYLAASWQSGQTNSGLRYRRFPFLATLRERAGPVTWIVMLACVVVYIAMSLIGDQTVMVWLAWPFDPVLKFEVWRYFTHIFMHFSLMHILFNLLWWWYLGGAVEKRLGSGKLIVITVISALLSGYVQQKFSGPWFGGLSGVVYALMGYVWLRGERDPQSGIYLQRGLIIFALLWIVASWFDWFGMSMANGAHIAGLIVGLAMAFVDTLNARKRT</sequence>
<gene>
    <name evidence="1" type="primary">glpG</name>
    <name type="ordered locus">SPA3382</name>
</gene>
<accession>Q5PLZ8</accession>
<protein>
    <recommendedName>
        <fullName evidence="1">Rhomboid protease GlpG</fullName>
        <ecNumber evidence="1">3.4.21.105</ecNumber>
    </recommendedName>
    <alternativeName>
        <fullName evidence="1">Intramembrane serine protease</fullName>
    </alternativeName>
</protein>
<evidence type="ECO:0000255" key="1">
    <source>
        <dbReference type="HAMAP-Rule" id="MF_01594"/>
    </source>
</evidence>